<evidence type="ECO:0000250" key="1">
    <source>
        <dbReference type="UniProtKB" id="Q91516"/>
    </source>
</evidence>
<evidence type="ECO:0000255" key="2">
    <source>
        <dbReference type="PROSITE-ProRule" id="PRU00274"/>
    </source>
</evidence>
<evidence type="ECO:0000269" key="3">
    <source>
    </source>
</evidence>
<evidence type="ECO:0000303" key="4">
    <source>
    </source>
</evidence>
<evidence type="ECO:0000305" key="5"/>
<evidence type="ECO:0000305" key="6">
    <source>
    </source>
</evidence>
<sequence>VVGGDECNINEHRSL</sequence>
<keyword id="KW-0903">Direct protein sequencing</keyword>
<keyword id="KW-1015">Disulfide bond</keyword>
<keyword id="KW-1199">Hemostasis impairing toxin</keyword>
<keyword id="KW-0378">Hydrolase</keyword>
<keyword id="KW-0645">Protease</keyword>
<keyword id="KW-0964">Secreted</keyword>
<keyword id="KW-0720">Serine protease</keyword>
<keyword id="KW-0800">Toxin</keyword>
<comment type="function">
    <text evidence="5">Snake venom serine protease homolog that may act in the hemostasis system of the prey.</text>
</comment>
<comment type="subcellular location">
    <subcellularLocation>
        <location evidence="3">Secreted</location>
    </subcellularLocation>
</comment>
<comment type="tissue specificity">
    <text evidence="6">Expressed by the venom gland.</text>
</comment>
<comment type="similarity">
    <text evidence="5">Belongs to the peptidase S1 family. Snake venom subfamily.</text>
</comment>
<reference evidence="5" key="1">
    <citation type="journal article" date="2010" name="Biomed. Res.">
        <title>Molecular diversity in venom proteins of the Russell's viper (Daboia russellii russellii) and the Indian cobra (Naja naja) in Sri Lanka.</title>
        <authorList>
            <person name="Suzuki M."/>
            <person name="Itoh T."/>
            <person name="Bandaranayake B.M.A.I.K."/>
            <person name="Ranasinghe J.G."/>
            <person name="Athauda S.B."/>
            <person name="Moriyama A."/>
        </authorList>
    </citation>
    <scope>PROTEIN SEQUENCE</scope>
    <scope>SUBCELLULAR LOCATION</scope>
    <source>
        <tissue evidence="3">Venom</tissue>
    </source>
</reference>
<proteinExistence type="evidence at protein level"/>
<dbReference type="EC" id="3.4.21.-"/>
<dbReference type="GO" id="GO:0005576">
    <property type="term" value="C:extracellular region"/>
    <property type="evidence" value="ECO:0007669"/>
    <property type="project" value="UniProtKB-SubCell"/>
</dbReference>
<dbReference type="GO" id="GO:0008236">
    <property type="term" value="F:serine-type peptidase activity"/>
    <property type="evidence" value="ECO:0007669"/>
    <property type="project" value="UniProtKB-KW"/>
</dbReference>
<dbReference type="GO" id="GO:0090729">
    <property type="term" value="F:toxin activity"/>
    <property type="evidence" value="ECO:0007669"/>
    <property type="project" value="UniProtKB-KW"/>
</dbReference>
<dbReference type="GO" id="GO:0006508">
    <property type="term" value="P:proteolysis"/>
    <property type="evidence" value="ECO:0007669"/>
    <property type="project" value="UniProtKB-KW"/>
</dbReference>
<name>VSP2_DABRR</name>
<protein>
    <recommendedName>
        <fullName>Vipera russelli proteinase RVV-V homolog 2</fullName>
        <shortName evidence="4">RVV-V 2</shortName>
        <ecNumber>3.4.21.-</ecNumber>
    </recommendedName>
    <alternativeName>
        <fullName>Snake venom serine protease</fullName>
        <shortName>SVSP</shortName>
    </alternativeName>
    <alternativeName>
        <fullName>Vipera russelli proteinase RVV-V homolog 3</fullName>
        <shortName evidence="4">RVV-V 3</shortName>
    </alternativeName>
</protein>
<feature type="chain" id="PRO_0000394727" description="Vipera russelli proteinase RVV-V homolog 2">
    <location>
        <begin position="1"/>
        <end position="15" status="greater than"/>
    </location>
</feature>
<feature type="disulfide bond" evidence="1 2">
    <location>
        <begin position="7"/>
        <end status="unknown"/>
    </location>
</feature>
<feature type="non-terminal residue" evidence="4">
    <location>
        <position position="15"/>
    </location>
</feature>
<accession>P86531</accession>
<organism>
    <name type="scientific">Daboia russelii</name>
    <name type="common">Russel's viper</name>
    <name type="synonym">Vipera russelii</name>
    <dbReference type="NCBI Taxonomy" id="8707"/>
    <lineage>
        <taxon>Eukaryota</taxon>
        <taxon>Metazoa</taxon>
        <taxon>Chordata</taxon>
        <taxon>Craniata</taxon>
        <taxon>Vertebrata</taxon>
        <taxon>Euteleostomi</taxon>
        <taxon>Lepidosauria</taxon>
        <taxon>Squamata</taxon>
        <taxon>Bifurcata</taxon>
        <taxon>Unidentata</taxon>
        <taxon>Episquamata</taxon>
        <taxon>Toxicofera</taxon>
        <taxon>Serpentes</taxon>
        <taxon>Colubroidea</taxon>
        <taxon>Viperidae</taxon>
        <taxon>Viperinae</taxon>
        <taxon>Daboia</taxon>
    </lineage>
</organism>